<gene>
    <name evidence="1" type="primary">mnmE</name>
    <name evidence="1" type="synonym">trmE</name>
    <name type="ordered locus">SSU05_1454</name>
</gene>
<accession>A4VWD1</accession>
<feature type="chain" id="PRO_1000048894" description="tRNA modification GTPase MnmE">
    <location>
        <begin position="1"/>
        <end position="457"/>
    </location>
</feature>
<feature type="domain" description="TrmE-type G">
    <location>
        <begin position="223"/>
        <end position="377"/>
    </location>
</feature>
<feature type="binding site" evidence="1">
    <location>
        <position position="25"/>
    </location>
    <ligand>
        <name>(6S)-5-formyl-5,6,7,8-tetrahydrofolate</name>
        <dbReference type="ChEBI" id="CHEBI:57457"/>
    </ligand>
</feature>
<feature type="binding site" evidence="1">
    <location>
        <position position="87"/>
    </location>
    <ligand>
        <name>(6S)-5-formyl-5,6,7,8-tetrahydrofolate</name>
        <dbReference type="ChEBI" id="CHEBI:57457"/>
    </ligand>
</feature>
<feature type="binding site" evidence="1">
    <location>
        <position position="126"/>
    </location>
    <ligand>
        <name>(6S)-5-formyl-5,6,7,8-tetrahydrofolate</name>
        <dbReference type="ChEBI" id="CHEBI:57457"/>
    </ligand>
</feature>
<feature type="binding site" evidence="1">
    <location>
        <begin position="233"/>
        <end position="238"/>
    </location>
    <ligand>
        <name>GTP</name>
        <dbReference type="ChEBI" id="CHEBI:37565"/>
    </ligand>
</feature>
<feature type="binding site" evidence="1">
    <location>
        <position position="233"/>
    </location>
    <ligand>
        <name>K(+)</name>
        <dbReference type="ChEBI" id="CHEBI:29103"/>
    </ligand>
</feature>
<feature type="binding site" evidence="1">
    <location>
        <position position="237"/>
    </location>
    <ligand>
        <name>Mg(2+)</name>
        <dbReference type="ChEBI" id="CHEBI:18420"/>
    </ligand>
</feature>
<feature type="binding site" evidence="1">
    <location>
        <begin position="252"/>
        <end position="258"/>
    </location>
    <ligand>
        <name>GTP</name>
        <dbReference type="ChEBI" id="CHEBI:37565"/>
    </ligand>
</feature>
<feature type="binding site" evidence="1">
    <location>
        <position position="252"/>
    </location>
    <ligand>
        <name>K(+)</name>
        <dbReference type="ChEBI" id="CHEBI:29103"/>
    </ligand>
</feature>
<feature type="binding site" evidence="1">
    <location>
        <position position="254"/>
    </location>
    <ligand>
        <name>K(+)</name>
        <dbReference type="ChEBI" id="CHEBI:29103"/>
    </ligand>
</feature>
<feature type="binding site" evidence="1">
    <location>
        <position position="257"/>
    </location>
    <ligand>
        <name>K(+)</name>
        <dbReference type="ChEBI" id="CHEBI:29103"/>
    </ligand>
</feature>
<feature type="binding site" evidence="1">
    <location>
        <position position="258"/>
    </location>
    <ligand>
        <name>Mg(2+)</name>
        <dbReference type="ChEBI" id="CHEBI:18420"/>
    </ligand>
</feature>
<feature type="binding site" evidence="1">
    <location>
        <begin position="277"/>
        <end position="280"/>
    </location>
    <ligand>
        <name>GTP</name>
        <dbReference type="ChEBI" id="CHEBI:37565"/>
    </ligand>
</feature>
<feature type="binding site" evidence="1">
    <location>
        <position position="457"/>
    </location>
    <ligand>
        <name>(6S)-5-formyl-5,6,7,8-tetrahydrofolate</name>
        <dbReference type="ChEBI" id="CHEBI:57457"/>
    </ligand>
</feature>
<keyword id="KW-0963">Cytoplasm</keyword>
<keyword id="KW-0342">GTP-binding</keyword>
<keyword id="KW-0378">Hydrolase</keyword>
<keyword id="KW-0460">Magnesium</keyword>
<keyword id="KW-0479">Metal-binding</keyword>
<keyword id="KW-0547">Nucleotide-binding</keyword>
<keyword id="KW-0630">Potassium</keyword>
<keyword id="KW-0819">tRNA processing</keyword>
<protein>
    <recommendedName>
        <fullName evidence="1">tRNA modification GTPase MnmE</fullName>
        <ecNumber evidence="1">3.6.-.-</ecNumber>
    </recommendedName>
</protein>
<comment type="function">
    <text evidence="1">Exhibits a very high intrinsic GTPase hydrolysis rate. Involved in the addition of a carboxymethylaminomethyl (cmnm) group at the wobble position (U34) of certain tRNAs, forming tRNA-cmnm(5)s(2)U34.</text>
</comment>
<comment type="cofactor">
    <cofactor evidence="1">
        <name>K(+)</name>
        <dbReference type="ChEBI" id="CHEBI:29103"/>
    </cofactor>
    <text evidence="1">Binds 1 potassium ion per subunit.</text>
</comment>
<comment type="subunit">
    <text evidence="1">Homodimer. Heterotetramer of two MnmE and two MnmG subunits.</text>
</comment>
<comment type="subcellular location">
    <subcellularLocation>
        <location evidence="1">Cytoplasm</location>
    </subcellularLocation>
</comment>
<comment type="similarity">
    <text evidence="1">Belongs to the TRAFAC class TrmE-Era-EngA-EngB-Septin-like GTPase superfamily. TrmE GTPase family.</text>
</comment>
<reference key="1">
    <citation type="journal article" date="2007" name="PLoS ONE">
        <title>A glimpse of streptococcal toxic shock syndrome from comparative genomics of S. suis 2 Chinese isolates.</title>
        <authorList>
            <person name="Chen C."/>
            <person name="Tang J."/>
            <person name="Dong W."/>
            <person name="Wang C."/>
            <person name="Feng Y."/>
            <person name="Wang J."/>
            <person name="Zheng F."/>
            <person name="Pan X."/>
            <person name="Liu D."/>
            <person name="Li M."/>
            <person name="Song Y."/>
            <person name="Zhu X."/>
            <person name="Sun H."/>
            <person name="Feng T."/>
            <person name="Guo Z."/>
            <person name="Ju A."/>
            <person name="Ge J."/>
            <person name="Dong Y."/>
            <person name="Sun W."/>
            <person name="Jiang Y."/>
            <person name="Wang J."/>
            <person name="Yan J."/>
            <person name="Yang H."/>
            <person name="Wang X."/>
            <person name="Gao G.F."/>
            <person name="Yang R."/>
            <person name="Wang J."/>
            <person name="Yu J."/>
        </authorList>
    </citation>
    <scope>NUCLEOTIDE SEQUENCE [LARGE SCALE GENOMIC DNA]</scope>
    <source>
        <strain>05ZYH33</strain>
    </source>
</reference>
<dbReference type="EC" id="3.6.-.-" evidence="1"/>
<dbReference type="EMBL" id="CP000407">
    <property type="protein sequence ID" value="ABP90420.1"/>
    <property type="molecule type" value="Genomic_DNA"/>
</dbReference>
<dbReference type="SMR" id="A4VWD1"/>
<dbReference type="STRING" id="391295.SSU05_1454"/>
<dbReference type="KEGG" id="ssu:SSU05_1454"/>
<dbReference type="eggNOG" id="COG0486">
    <property type="taxonomic scope" value="Bacteria"/>
</dbReference>
<dbReference type="HOGENOM" id="CLU_019624_4_1_9"/>
<dbReference type="PHI-base" id="PHI:11090"/>
<dbReference type="PHI-base" id="PHI:9270"/>
<dbReference type="GO" id="GO:0005829">
    <property type="term" value="C:cytosol"/>
    <property type="evidence" value="ECO:0007669"/>
    <property type="project" value="TreeGrafter"/>
</dbReference>
<dbReference type="GO" id="GO:0005525">
    <property type="term" value="F:GTP binding"/>
    <property type="evidence" value="ECO:0007669"/>
    <property type="project" value="UniProtKB-UniRule"/>
</dbReference>
<dbReference type="GO" id="GO:0003924">
    <property type="term" value="F:GTPase activity"/>
    <property type="evidence" value="ECO:0007669"/>
    <property type="project" value="UniProtKB-UniRule"/>
</dbReference>
<dbReference type="GO" id="GO:0046872">
    <property type="term" value="F:metal ion binding"/>
    <property type="evidence" value="ECO:0007669"/>
    <property type="project" value="UniProtKB-KW"/>
</dbReference>
<dbReference type="GO" id="GO:0030488">
    <property type="term" value="P:tRNA methylation"/>
    <property type="evidence" value="ECO:0007669"/>
    <property type="project" value="TreeGrafter"/>
</dbReference>
<dbReference type="GO" id="GO:0002098">
    <property type="term" value="P:tRNA wobble uridine modification"/>
    <property type="evidence" value="ECO:0007669"/>
    <property type="project" value="TreeGrafter"/>
</dbReference>
<dbReference type="CDD" id="cd04164">
    <property type="entry name" value="trmE"/>
    <property type="match status" value="1"/>
</dbReference>
<dbReference type="CDD" id="cd14858">
    <property type="entry name" value="TrmE_N"/>
    <property type="match status" value="1"/>
</dbReference>
<dbReference type="FunFam" id="3.30.1360.120:FF:000003">
    <property type="entry name" value="tRNA modification GTPase MnmE"/>
    <property type="match status" value="1"/>
</dbReference>
<dbReference type="FunFam" id="3.40.50.300:FF:000494">
    <property type="entry name" value="tRNA modification GTPase MnmE"/>
    <property type="match status" value="1"/>
</dbReference>
<dbReference type="Gene3D" id="3.40.50.300">
    <property type="entry name" value="P-loop containing nucleotide triphosphate hydrolases"/>
    <property type="match status" value="1"/>
</dbReference>
<dbReference type="Gene3D" id="3.30.1360.120">
    <property type="entry name" value="Probable tRNA modification gtpase trme, domain 1"/>
    <property type="match status" value="1"/>
</dbReference>
<dbReference type="Gene3D" id="1.20.120.430">
    <property type="entry name" value="tRNA modification GTPase MnmE domain 2"/>
    <property type="match status" value="1"/>
</dbReference>
<dbReference type="HAMAP" id="MF_00379">
    <property type="entry name" value="GTPase_MnmE"/>
    <property type="match status" value="1"/>
</dbReference>
<dbReference type="InterPro" id="IPR031168">
    <property type="entry name" value="G_TrmE"/>
</dbReference>
<dbReference type="InterPro" id="IPR006073">
    <property type="entry name" value="GTP-bd"/>
</dbReference>
<dbReference type="InterPro" id="IPR018948">
    <property type="entry name" value="GTP-bd_TrmE_N"/>
</dbReference>
<dbReference type="InterPro" id="IPR004520">
    <property type="entry name" value="GTPase_MnmE"/>
</dbReference>
<dbReference type="InterPro" id="IPR027368">
    <property type="entry name" value="MnmE_dom2"/>
</dbReference>
<dbReference type="InterPro" id="IPR025867">
    <property type="entry name" value="MnmE_helical"/>
</dbReference>
<dbReference type="InterPro" id="IPR027417">
    <property type="entry name" value="P-loop_NTPase"/>
</dbReference>
<dbReference type="InterPro" id="IPR005225">
    <property type="entry name" value="Small_GTP-bd"/>
</dbReference>
<dbReference type="InterPro" id="IPR027266">
    <property type="entry name" value="TrmE/GcvT_dom1"/>
</dbReference>
<dbReference type="NCBIfam" id="TIGR00450">
    <property type="entry name" value="mnmE_trmE_thdF"/>
    <property type="match status" value="1"/>
</dbReference>
<dbReference type="NCBIfam" id="NF003661">
    <property type="entry name" value="PRK05291.1-3"/>
    <property type="match status" value="1"/>
</dbReference>
<dbReference type="NCBIfam" id="TIGR00231">
    <property type="entry name" value="small_GTP"/>
    <property type="match status" value="1"/>
</dbReference>
<dbReference type="PANTHER" id="PTHR42714">
    <property type="entry name" value="TRNA MODIFICATION GTPASE GTPBP3"/>
    <property type="match status" value="1"/>
</dbReference>
<dbReference type="PANTHER" id="PTHR42714:SF2">
    <property type="entry name" value="TRNA MODIFICATION GTPASE GTPBP3, MITOCHONDRIAL"/>
    <property type="match status" value="1"/>
</dbReference>
<dbReference type="Pfam" id="PF01926">
    <property type="entry name" value="MMR_HSR1"/>
    <property type="match status" value="1"/>
</dbReference>
<dbReference type="Pfam" id="PF12631">
    <property type="entry name" value="MnmE_helical"/>
    <property type="match status" value="1"/>
</dbReference>
<dbReference type="Pfam" id="PF10396">
    <property type="entry name" value="TrmE_N"/>
    <property type="match status" value="1"/>
</dbReference>
<dbReference type="SUPFAM" id="SSF52540">
    <property type="entry name" value="P-loop containing nucleoside triphosphate hydrolases"/>
    <property type="match status" value="1"/>
</dbReference>
<dbReference type="SUPFAM" id="SSF116878">
    <property type="entry name" value="TrmE connector domain"/>
    <property type="match status" value="1"/>
</dbReference>
<dbReference type="PROSITE" id="PS51709">
    <property type="entry name" value="G_TRME"/>
    <property type="match status" value="1"/>
</dbReference>
<organism>
    <name type="scientific">Streptococcus suis (strain 05ZYH33)</name>
    <dbReference type="NCBI Taxonomy" id="391295"/>
    <lineage>
        <taxon>Bacteria</taxon>
        <taxon>Bacillati</taxon>
        <taxon>Bacillota</taxon>
        <taxon>Bacilli</taxon>
        <taxon>Lactobacillales</taxon>
        <taxon>Streptococcaceae</taxon>
        <taxon>Streptococcus</taxon>
    </lineage>
</organism>
<proteinExistence type="inferred from homology"/>
<name>MNME_STRSY</name>
<evidence type="ECO:0000255" key="1">
    <source>
        <dbReference type="HAMAP-Rule" id="MF_00379"/>
    </source>
</evidence>
<sequence length="457" mass="50405">MITKEFDTIAAISTPLGEGAIGIVRLSGTDAFAIASTVFKGKDLATVPSHSLNYGHAIDPATGQVLDEVMIGAMRSPKTFTREDVIEINTHGGIAVTNEILQLLIRQGARMAEPGEFTKRAFLNGRVDLTQAEAVMDVIRAKTDKAMHNAVRQLDGSLSQLINDTRQEILNTLAQVEVNIDYPEYDDVEEATTELVREKTLQFQALLENLLRTARRGKILREGIATAIIGRPNVGKSSLLNNLLREEKAIVTDIAGTTRDVIEEYVNIKGVPLKLIDTAGIRETDDIVEKIGVERSKKALEEADLILLVLNASEPLTEQDRNLLAISDMANRIVLLNKTDLEEQIEVDQLPEDVIRISVLQNQNIDQIEEKINQLFFENAGLVEQDATYLSNSRHISLIEQAVQSLHAVNDGLKVGMPVDLLQVDLTRCWQILGEITGDAAPDELITQLFSQFCLGK</sequence>